<name>PSBA_LEMMI</name>
<organism>
    <name type="scientific">Lemna minor</name>
    <name type="common">Common duckweed</name>
    <dbReference type="NCBI Taxonomy" id="4472"/>
    <lineage>
        <taxon>Eukaryota</taxon>
        <taxon>Viridiplantae</taxon>
        <taxon>Streptophyta</taxon>
        <taxon>Embryophyta</taxon>
        <taxon>Tracheophyta</taxon>
        <taxon>Spermatophyta</taxon>
        <taxon>Magnoliopsida</taxon>
        <taxon>Liliopsida</taxon>
        <taxon>Araceae</taxon>
        <taxon>Lemnoideae</taxon>
        <taxon>Lemna</taxon>
    </lineage>
</organism>
<sequence>MTAILERRESTSLWGRFCNWVTSTENRLYIGWFGVLMIPTLLTATSVFIIAFIAAPPVDIDGIREPVSGSLLYGNNIISGAVIPTSAAIGLHFYPIWEAASVDEWLYNGGPYELIVLHFLLGVACYMGREWELSFRLGMRPWIAVAYSAPVAAATAVFLIYPIGQGSFSDGMPLGISGTFNFMIVFQAEHNILMHPFHMLGVAGVFGGSLFSAMHGSLVTSSLIRETTENESANEGYRFGQEEETYNIVAAHGYFGRLIFQYASFNNSRSLHFFLAAWPVVGIWFTALGISTMAFNLNGFNFNQSVVDSQGRVINTWADIINRANLGMEVMHERNAHNFPLDLAAVEAPSTIG</sequence>
<gene>
    <name evidence="1" type="primary">psbA</name>
</gene>
<feature type="initiator methionine" description="Removed" evidence="1">
    <location>
        <position position="1"/>
    </location>
</feature>
<feature type="chain" id="PRO_0000340007" description="Photosystem II protein D1" evidence="1">
    <location>
        <begin position="2"/>
        <end position="344"/>
    </location>
</feature>
<feature type="propeptide" id="PRO_0000340008" evidence="1">
    <location>
        <begin position="345"/>
        <end position="353"/>
    </location>
</feature>
<feature type="transmembrane region" description="Helical" evidence="1">
    <location>
        <begin position="29"/>
        <end position="46"/>
    </location>
</feature>
<feature type="transmembrane region" description="Helical" evidence="1">
    <location>
        <begin position="118"/>
        <end position="133"/>
    </location>
</feature>
<feature type="transmembrane region" description="Helical" evidence="1">
    <location>
        <begin position="142"/>
        <end position="156"/>
    </location>
</feature>
<feature type="transmembrane region" description="Helical" evidence="1">
    <location>
        <begin position="197"/>
        <end position="218"/>
    </location>
</feature>
<feature type="transmembrane region" description="Helical" evidence="1">
    <location>
        <begin position="274"/>
        <end position="288"/>
    </location>
</feature>
<feature type="binding site" description="axial binding residue" evidence="1">
    <location>
        <position position="118"/>
    </location>
    <ligand>
        <name>chlorophyll a</name>
        <dbReference type="ChEBI" id="CHEBI:58416"/>
        <label>ChlzD1</label>
    </ligand>
    <ligandPart>
        <name>Mg</name>
        <dbReference type="ChEBI" id="CHEBI:25107"/>
    </ligandPart>
</feature>
<feature type="binding site" evidence="1">
    <location>
        <position position="126"/>
    </location>
    <ligand>
        <name>pheophytin a</name>
        <dbReference type="ChEBI" id="CHEBI:136840"/>
        <label>D1</label>
    </ligand>
</feature>
<feature type="binding site" evidence="1">
    <location>
        <position position="170"/>
    </location>
    <ligand>
        <name>[CaMn4O5] cluster</name>
        <dbReference type="ChEBI" id="CHEBI:189552"/>
    </ligand>
</feature>
<feature type="binding site" evidence="1">
    <location>
        <position position="189"/>
    </location>
    <ligand>
        <name>[CaMn4O5] cluster</name>
        <dbReference type="ChEBI" id="CHEBI:189552"/>
    </ligand>
</feature>
<feature type="binding site" description="axial binding residue" evidence="1">
    <location>
        <position position="198"/>
    </location>
    <ligand>
        <name>chlorophyll a</name>
        <dbReference type="ChEBI" id="CHEBI:58416"/>
        <label>PD1</label>
    </ligand>
    <ligandPart>
        <name>Mg</name>
        <dbReference type="ChEBI" id="CHEBI:25107"/>
    </ligandPart>
</feature>
<feature type="binding site" evidence="1">
    <location>
        <position position="215"/>
    </location>
    <ligand>
        <name>a quinone</name>
        <dbReference type="ChEBI" id="CHEBI:132124"/>
        <label>B</label>
    </ligand>
</feature>
<feature type="binding site" evidence="1">
    <location>
        <position position="215"/>
    </location>
    <ligand>
        <name>Fe cation</name>
        <dbReference type="ChEBI" id="CHEBI:24875"/>
        <note>ligand shared with heterodimeric partner</note>
    </ligand>
</feature>
<feature type="binding site" evidence="1">
    <location>
        <begin position="264"/>
        <end position="265"/>
    </location>
    <ligand>
        <name>a quinone</name>
        <dbReference type="ChEBI" id="CHEBI:132124"/>
        <label>B</label>
    </ligand>
</feature>
<feature type="binding site" evidence="1">
    <location>
        <position position="272"/>
    </location>
    <ligand>
        <name>Fe cation</name>
        <dbReference type="ChEBI" id="CHEBI:24875"/>
        <note>ligand shared with heterodimeric partner</note>
    </ligand>
</feature>
<feature type="binding site" evidence="1">
    <location>
        <position position="332"/>
    </location>
    <ligand>
        <name>[CaMn4O5] cluster</name>
        <dbReference type="ChEBI" id="CHEBI:189552"/>
    </ligand>
</feature>
<feature type="binding site" evidence="1">
    <location>
        <position position="333"/>
    </location>
    <ligand>
        <name>[CaMn4O5] cluster</name>
        <dbReference type="ChEBI" id="CHEBI:189552"/>
    </ligand>
</feature>
<feature type="binding site" evidence="1">
    <location>
        <position position="342"/>
    </location>
    <ligand>
        <name>[CaMn4O5] cluster</name>
        <dbReference type="ChEBI" id="CHEBI:189552"/>
    </ligand>
</feature>
<feature type="binding site" evidence="1">
    <location>
        <position position="344"/>
    </location>
    <ligand>
        <name>[CaMn4O5] cluster</name>
        <dbReference type="ChEBI" id="CHEBI:189552"/>
    </ligand>
</feature>
<feature type="site" description="Tyrosine radical intermediate" evidence="1">
    <location>
        <position position="161"/>
    </location>
</feature>
<feature type="site" description="Stabilizes free radical intermediate" evidence="1">
    <location>
        <position position="190"/>
    </location>
</feature>
<feature type="site" description="Cleavage; by CTPA" evidence="1">
    <location>
        <begin position="344"/>
        <end position="345"/>
    </location>
</feature>
<feature type="modified residue" description="N-acetylthreonine" evidence="1">
    <location>
        <position position="2"/>
    </location>
</feature>
<feature type="modified residue" description="Phosphothreonine" evidence="1">
    <location>
        <position position="2"/>
    </location>
</feature>
<keyword id="KW-0007">Acetylation</keyword>
<keyword id="KW-0106">Calcium</keyword>
<keyword id="KW-0148">Chlorophyll</keyword>
<keyword id="KW-0150">Chloroplast</keyword>
<keyword id="KW-0157">Chromophore</keyword>
<keyword id="KW-0249">Electron transport</keyword>
<keyword id="KW-0359">Herbicide resistance</keyword>
<keyword id="KW-0408">Iron</keyword>
<keyword id="KW-0460">Magnesium</keyword>
<keyword id="KW-0464">Manganese</keyword>
<keyword id="KW-0472">Membrane</keyword>
<keyword id="KW-0479">Metal-binding</keyword>
<keyword id="KW-0560">Oxidoreductase</keyword>
<keyword id="KW-0597">Phosphoprotein</keyword>
<keyword id="KW-0602">Photosynthesis</keyword>
<keyword id="KW-0604">Photosystem II</keyword>
<keyword id="KW-0934">Plastid</keyword>
<keyword id="KW-0793">Thylakoid</keyword>
<keyword id="KW-0812">Transmembrane</keyword>
<keyword id="KW-1133">Transmembrane helix</keyword>
<keyword id="KW-0813">Transport</keyword>
<dbReference type="EC" id="1.10.3.9" evidence="1"/>
<dbReference type="EMBL" id="DQ400350">
    <property type="protein sequence ID" value="ABD48477.1"/>
    <property type="molecule type" value="Genomic_DNA"/>
</dbReference>
<dbReference type="RefSeq" id="YP_001595488.1">
    <property type="nucleotide sequence ID" value="NC_010109.1"/>
</dbReference>
<dbReference type="SMR" id="A9L976"/>
<dbReference type="GeneID" id="5787591"/>
<dbReference type="GO" id="GO:0009535">
    <property type="term" value="C:chloroplast thylakoid membrane"/>
    <property type="evidence" value="ECO:0007669"/>
    <property type="project" value="UniProtKB-SubCell"/>
</dbReference>
<dbReference type="GO" id="GO:0009523">
    <property type="term" value="C:photosystem II"/>
    <property type="evidence" value="ECO:0007669"/>
    <property type="project" value="UniProtKB-KW"/>
</dbReference>
<dbReference type="GO" id="GO:0016168">
    <property type="term" value="F:chlorophyll binding"/>
    <property type="evidence" value="ECO:0007669"/>
    <property type="project" value="UniProtKB-UniRule"/>
</dbReference>
<dbReference type="GO" id="GO:0045156">
    <property type="term" value="F:electron transporter, transferring electrons within the cyclic electron transport pathway of photosynthesis activity"/>
    <property type="evidence" value="ECO:0007669"/>
    <property type="project" value="InterPro"/>
</dbReference>
<dbReference type="GO" id="GO:0005506">
    <property type="term" value="F:iron ion binding"/>
    <property type="evidence" value="ECO:0007669"/>
    <property type="project" value="UniProtKB-UniRule"/>
</dbReference>
<dbReference type="GO" id="GO:0016682">
    <property type="term" value="F:oxidoreductase activity, acting on diphenols and related substances as donors, oxygen as acceptor"/>
    <property type="evidence" value="ECO:0007669"/>
    <property type="project" value="UniProtKB-UniRule"/>
</dbReference>
<dbReference type="GO" id="GO:0010242">
    <property type="term" value="F:oxygen evolving activity"/>
    <property type="evidence" value="ECO:0007669"/>
    <property type="project" value="UniProtKB-EC"/>
</dbReference>
<dbReference type="GO" id="GO:0009772">
    <property type="term" value="P:photosynthetic electron transport in photosystem II"/>
    <property type="evidence" value="ECO:0007669"/>
    <property type="project" value="InterPro"/>
</dbReference>
<dbReference type="GO" id="GO:0009635">
    <property type="term" value="P:response to herbicide"/>
    <property type="evidence" value="ECO:0007669"/>
    <property type="project" value="UniProtKB-KW"/>
</dbReference>
<dbReference type="CDD" id="cd09289">
    <property type="entry name" value="Photosystem-II_D1"/>
    <property type="match status" value="1"/>
</dbReference>
<dbReference type="FunFam" id="1.20.85.10:FF:000002">
    <property type="entry name" value="Photosystem II protein D1"/>
    <property type="match status" value="1"/>
</dbReference>
<dbReference type="Gene3D" id="1.20.85.10">
    <property type="entry name" value="Photosystem II protein D1-like"/>
    <property type="match status" value="1"/>
</dbReference>
<dbReference type="HAMAP" id="MF_01379">
    <property type="entry name" value="PSII_PsbA_D1"/>
    <property type="match status" value="1"/>
</dbReference>
<dbReference type="InterPro" id="IPR055266">
    <property type="entry name" value="D1/D2"/>
</dbReference>
<dbReference type="InterPro" id="IPR036854">
    <property type="entry name" value="Photo_II_D1/D2_sf"/>
</dbReference>
<dbReference type="InterPro" id="IPR000484">
    <property type="entry name" value="Photo_RC_L/M"/>
</dbReference>
<dbReference type="InterPro" id="IPR055265">
    <property type="entry name" value="Photo_RC_L/M_CS"/>
</dbReference>
<dbReference type="InterPro" id="IPR005867">
    <property type="entry name" value="PSII_D1"/>
</dbReference>
<dbReference type="NCBIfam" id="TIGR01151">
    <property type="entry name" value="psbA"/>
    <property type="match status" value="1"/>
</dbReference>
<dbReference type="PANTHER" id="PTHR33149:SF12">
    <property type="entry name" value="PHOTOSYSTEM II D2 PROTEIN"/>
    <property type="match status" value="1"/>
</dbReference>
<dbReference type="PANTHER" id="PTHR33149">
    <property type="entry name" value="PHOTOSYSTEM II PROTEIN D1"/>
    <property type="match status" value="1"/>
</dbReference>
<dbReference type="Pfam" id="PF00124">
    <property type="entry name" value="Photo_RC"/>
    <property type="match status" value="1"/>
</dbReference>
<dbReference type="PRINTS" id="PR00256">
    <property type="entry name" value="REACTNCENTRE"/>
</dbReference>
<dbReference type="SUPFAM" id="SSF81483">
    <property type="entry name" value="Bacterial photosystem II reaction centre, L and M subunits"/>
    <property type="match status" value="1"/>
</dbReference>
<dbReference type="PROSITE" id="PS00244">
    <property type="entry name" value="REACTION_CENTER"/>
    <property type="match status" value="1"/>
</dbReference>
<proteinExistence type="inferred from homology"/>
<geneLocation type="chloroplast"/>
<evidence type="ECO:0000255" key="1">
    <source>
        <dbReference type="HAMAP-Rule" id="MF_01379"/>
    </source>
</evidence>
<comment type="function">
    <text evidence="1">Photosystem II (PSII) is a light-driven water:plastoquinone oxidoreductase that uses light energy to abstract electrons from H(2)O, generating O(2) and a proton gradient subsequently used for ATP formation. It consists of a core antenna complex that captures photons, and an electron transfer chain that converts photonic excitation into a charge separation. The D1/D2 (PsbA/PsbD) reaction center heterodimer binds P680, the primary electron donor of PSII as well as several subsequent electron acceptors.</text>
</comment>
<comment type="catalytic activity">
    <reaction evidence="1">
        <text>2 a plastoquinone + 4 hnu + 2 H2O = 2 a plastoquinol + O2</text>
        <dbReference type="Rhea" id="RHEA:36359"/>
        <dbReference type="Rhea" id="RHEA-COMP:9561"/>
        <dbReference type="Rhea" id="RHEA-COMP:9562"/>
        <dbReference type="ChEBI" id="CHEBI:15377"/>
        <dbReference type="ChEBI" id="CHEBI:15379"/>
        <dbReference type="ChEBI" id="CHEBI:17757"/>
        <dbReference type="ChEBI" id="CHEBI:30212"/>
        <dbReference type="ChEBI" id="CHEBI:62192"/>
        <dbReference type="EC" id="1.10.3.9"/>
    </reaction>
</comment>
<comment type="cofactor">
    <text evidence="1">The D1/D2 heterodimer binds P680, chlorophylls that are the primary electron donor of PSII, and subsequent electron acceptors. It shares a non-heme iron and each subunit binds pheophytin, quinone, additional chlorophylls, carotenoids and lipids. D1 provides most of the ligands for the Mn4-Ca-O5 cluster of the oxygen-evolving complex (OEC). There is also a Cl(-1) ion associated with D1 and D2, which is required for oxygen evolution. The PSII complex binds additional chlorophylls, carotenoids and specific lipids.</text>
</comment>
<comment type="subunit">
    <text evidence="1">PSII is composed of 1 copy each of membrane proteins PsbA, PsbB, PsbC, PsbD, PsbE, PsbF, PsbH, PsbI, PsbJ, PsbK, PsbL, PsbM, PsbT, PsbX, PsbY, PsbZ, Psb30/Ycf12, at least 3 peripheral proteins of the oxygen-evolving complex and a large number of cofactors. It forms dimeric complexes.</text>
</comment>
<comment type="subcellular location">
    <subcellularLocation>
        <location evidence="1">Plastid</location>
        <location evidence="1">Chloroplast thylakoid membrane</location>
        <topology evidence="1">Multi-pass membrane protein</topology>
    </subcellularLocation>
</comment>
<comment type="PTM">
    <text evidence="1">Tyr-161 forms a radical intermediate that is referred to as redox-active TyrZ, YZ or Y-Z.</text>
</comment>
<comment type="PTM">
    <text evidence="1">C-terminally processed by CTPA; processing is essential to allow assembly of the oxygen-evolving complex and thus photosynthetic growth.</text>
</comment>
<comment type="miscellaneous">
    <text evidence="1">2 of the reaction center chlorophylls (ChlD1 and ChlD2) are entirely coordinated by water.</text>
</comment>
<comment type="miscellaneous">
    <text evidence="1">Herbicides such as atrazine, BNT, diuron or ioxynil bind in the Q(B) binding site and block subsequent electron transfer.</text>
</comment>
<comment type="similarity">
    <text evidence="1">Belongs to the reaction center PufL/M/PsbA/D family.</text>
</comment>
<accession>A9L976</accession>
<reference key="1">
    <citation type="journal article" date="2008" name="J. Mol. Evol.">
        <title>Complete sequence of the Duckweed (Lemna minor) chloroplast genome: structural organization and phylogenetic relationships to other angiosperms.</title>
        <authorList>
            <person name="Mardanov A.V."/>
            <person name="Ravin N.V."/>
            <person name="Kuznetsov B.B."/>
            <person name="Samigullin T.H."/>
            <person name="Antonov A.S."/>
            <person name="Kolganova T.V."/>
            <person name="Skyabin K.G."/>
        </authorList>
    </citation>
    <scope>NUCLEOTIDE SEQUENCE [LARGE SCALE GENOMIC DNA]</scope>
</reference>
<protein>
    <recommendedName>
        <fullName evidence="1">Photosystem II protein D1</fullName>
        <shortName evidence="1">PSII D1 protein</shortName>
        <ecNumber evidence="1">1.10.3.9</ecNumber>
    </recommendedName>
    <alternativeName>
        <fullName evidence="1">Photosystem II Q(B) protein</fullName>
    </alternativeName>
</protein>